<accession>Q9NS62</accession>
<accession>A2A3J3</accession>
<accession>B2RCF5</accession>
<accession>Q6P3U1</accession>
<accession>Q6UXZ2</accession>
<protein>
    <recommendedName>
        <fullName>Thrombospondin type-1 domain-containing protein 1</fullName>
    </recommendedName>
    <alternativeName>
        <fullName>Transmembrane molecule with thrombospondin module</fullName>
    </alternativeName>
</protein>
<organism>
    <name type="scientific">Homo sapiens</name>
    <name type="common">Human</name>
    <dbReference type="NCBI Taxonomy" id="9606"/>
    <lineage>
        <taxon>Eukaryota</taxon>
        <taxon>Metazoa</taxon>
        <taxon>Chordata</taxon>
        <taxon>Craniata</taxon>
        <taxon>Vertebrata</taxon>
        <taxon>Euteleostomi</taxon>
        <taxon>Mammalia</taxon>
        <taxon>Eutheria</taxon>
        <taxon>Euarchontoglires</taxon>
        <taxon>Primates</taxon>
        <taxon>Haplorrhini</taxon>
        <taxon>Catarrhini</taxon>
        <taxon>Hominidae</taxon>
        <taxon>Homo</taxon>
    </lineage>
</organism>
<keyword id="KW-0025">Alternative splicing</keyword>
<keyword id="KW-0965">Cell junction</keyword>
<keyword id="KW-0225">Disease variant</keyword>
<keyword id="KW-1015">Disulfide bond</keyword>
<keyword id="KW-0967">Endosome</keyword>
<keyword id="KW-0325">Glycoprotein</keyword>
<keyword id="KW-0472">Membrane</keyword>
<keyword id="KW-0597">Phosphoprotein</keyword>
<keyword id="KW-1267">Proteomics identification</keyword>
<keyword id="KW-1185">Reference proteome</keyword>
<keyword id="KW-0964">Secreted</keyword>
<keyword id="KW-0732">Signal</keyword>
<keyword id="KW-0812">Transmembrane</keyword>
<keyword id="KW-1133">Transmembrane helix</keyword>
<gene>
    <name type="primary">THSD1</name>
    <name type="synonym">TMTSP</name>
    <name type="ORF">UNQ3010/PRO9769</name>
</gene>
<feature type="signal peptide" evidence="2">
    <location>
        <begin position="1"/>
        <end position="24"/>
    </location>
</feature>
<feature type="chain" id="PRO_0000249584" description="Thrombospondin type-1 domain-containing protein 1">
    <location>
        <begin position="25"/>
        <end position="852"/>
    </location>
</feature>
<feature type="topological domain" description="Extracellular" evidence="2">
    <location>
        <begin position="25"/>
        <end position="413"/>
    </location>
</feature>
<feature type="transmembrane region" description="Helical" evidence="2">
    <location>
        <begin position="414"/>
        <end position="434"/>
    </location>
</feature>
<feature type="topological domain" description="Cytoplasmic" evidence="2">
    <location>
        <begin position="435"/>
        <end position="852"/>
    </location>
</feature>
<feature type="domain" description="TSP type-1" evidence="3">
    <location>
        <begin position="340"/>
        <end position="393"/>
    </location>
</feature>
<feature type="region of interest" description="Disordered" evidence="4">
    <location>
        <begin position="444"/>
        <end position="517"/>
    </location>
</feature>
<feature type="region of interest" description="Disordered" evidence="4">
    <location>
        <begin position="624"/>
        <end position="799"/>
    </location>
</feature>
<feature type="compositionally biased region" description="Basic residues" evidence="4">
    <location>
        <begin position="645"/>
        <end position="654"/>
    </location>
</feature>
<feature type="compositionally biased region" description="Basic and acidic residues" evidence="4">
    <location>
        <begin position="655"/>
        <end position="669"/>
    </location>
</feature>
<feature type="compositionally biased region" description="Polar residues" evidence="4">
    <location>
        <begin position="670"/>
        <end position="685"/>
    </location>
</feature>
<feature type="compositionally biased region" description="Basic and acidic residues" evidence="4">
    <location>
        <begin position="686"/>
        <end position="696"/>
    </location>
</feature>
<feature type="compositionally biased region" description="Polar residues" evidence="4">
    <location>
        <begin position="766"/>
        <end position="778"/>
    </location>
</feature>
<feature type="compositionally biased region" description="Polar residues" evidence="4">
    <location>
        <begin position="785"/>
        <end position="794"/>
    </location>
</feature>
<feature type="modified residue" description="Phosphoserine" evidence="1">
    <location>
        <position position="463"/>
    </location>
</feature>
<feature type="glycosylation site" description="N-linked (GlcNAc...) asparagine" evidence="2">
    <location>
        <position position="39"/>
    </location>
</feature>
<feature type="glycosylation site" description="N-linked (GlcNAc...) asparagine" evidence="2">
    <location>
        <position position="53"/>
    </location>
</feature>
<feature type="glycosylation site" description="N-linked (GlcNAc...) asparagine" evidence="2">
    <location>
        <position position="58"/>
    </location>
</feature>
<feature type="glycosylation site" description="N-linked (GlcNAc...) asparagine" evidence="2">
    <location>
        <position position="69"/>
    </location>
</feature>
<feature type="glycosylation site" description="N-linked (GlcNAc...) asparagine" evidence="2">
    <location>
        <position position="80"/>
    </location>
</feature>
<feature type="glycosylation site" description="N-linked (GlcNAc...) asparagine" evidence="2">
    <location>
        <position position="135"/>
    </location>
</feature>
<feature type="glycosylation site" description="N-linked (GlcNAc...) asparagine" evidence="2">
    <location>
        <position position="304"/>
    </location>
</feature>
<feature type="disulfide bond" evidence="3">
    <location>
        <begin position="352"/>
        <end position="387"/>
    </location>
</feature>
<feature type="disulfide bond" evidence="3">
    <location>
        <begin position="356"/>
        <end position="392"/>
    </location>
</feature>
<feature type="disulfide bond" evidence="3">
    <location>
        <begin position="367"/>
        <end position="377"/>
    </location>
</feature>
<feature type="splice variant" id="VSP_020521" description="In isoform 2." evidence="10">
    <location>
        <begin position="341"/>
        <end position="393"/>
    </location>
</feature>
<feature type="splice variant" id="VSP_020522" description="In isoform 3." evidence="9">
    <original>AFQPSSPSPLQPQGPVKSNNIVTVTGISLCLFIIIA</original>
    <variation>GGFSLCCPGWSAVARSWLTTSSASRVHAILLPQPPE</variation>
    <location>
        <begin position="394"/>
        <end position="429"/>
    </location>
</feature>
<feature type="splice variant" id="VSP_020523" description="In isoform 3." evidence="9">
    <location>
        <begin position="430"/>
        <end position="852"/>
    </location>
</feature>
<feature type="sequence variant" id="VAR_083714" description="In ANIB12; loss of function in endothelial cell-matrix adhesion; undetectable protein expression; dbSNP:rs1380388780." evidence="6">
    <original>L</original>
    <variation>F</variation>
    <location>
        <position position="5"/>
    </location>
</feature>
<feature type="sequence variant" id="VAR_027474" description="In dbSNP:rs13313279.">
    <original>V</original>
    <variation>G</variation>
    <location>
        <position position="125"/>
    </location>
</feature>
<feature type="sequence variant" id="VAR_088151" description="In LMPHM13; uncertain significance; dbSNP:rs786205669." evidence="5">
    <original>C</original>
    <variation>Y</variation>
    <location>
        <position position="206"/>
    </location>
</feature>
<feature type="sequence variant" id="VAR_088152" description="In LMPHM13." evidence="5">
    <location>
        <begin position="224"/>
        <end position="852"/>
    </location>
</feature>
<feature type="sequence variant" id="VAR_027475" description="In dbSNP:rs9536062.">
    <original>R</original>
    <variation>G</variation>
    <location>
        <position position="224"/>
    </location>
</feature>
<feature type="sequence variant" id="VAR_083715" description="In ANIB12; loss of function in endothelial cell-matrix adhesion." evidence="6">
    <location>
        <begin position="450"/>
        <end position="852"/>
    </location>
</feature>
<feature type="sequence variant" id="VAR_083716" description="In ANIB12; uncertain significance; decreased function in endothelial cell-matrix adhesion; decreased interaction with TLN1; dbSNP:rs776400380." evidence="6 7">
    <original>R</original>
    <variation>W</variation>
    <location>
        <position position="460"/>
    </location>
</feature>
<feature type="sequence variant" id="VAR_083717" description="In ANIB12; uncertain significance; loss of function in endothelial cell-matrix adhesion; decreased interaction with TLN1; dbSNP:rs201805081." evidence="6 7">
    <original>E</original>
    <variation>G</variation>
    <location>
        <position position="466"/>
    </location>
</feature>
<feature type="sequence variant" id="VAR_061920" description="In dbSNP:rs56013270.">
    <original>D</original>
    <variation>H</variation>
    <location>
        <position position="491"/>
    </location>
</feature>
<feature type="sequence variant" id="VAR_088153" description="In LMPHM13." evidence="8">
    <location>
        <begin position="521"/>
        <end position="852"/>
    </location>
</feature>
<feature type="sequence variant" id="VAR_083718" description="In ANIB12; uncertain significance; loss of function in endothelial cell-matrix adhesion; decreased interaction with TLN1; dbSNP:rs141140186." evidence="6 7">
    <original>G</original>
    <variation>E</variation>
    <location>
        <position position="600"/>
    </location>
</feature>
<feature type="sequence variant" id="VAR_083719" description="In ANIB12; decreased function in endothelial cell-matrix adhesion; decreased interaction with TLN1; dbSNP:rs1024014523." evidence="6 7">
    <original>P</original>
    <variation>L</variation>
    <location>
        <position position="639"/>
    </location>
</feature>
<feature type="sequence variant" id="VAR_083720" description="In ANIB12; uncertain significance; loss of function in endothelial cell-matrix adhesion; decreased interaction with TLN1; dbSNP:rs371717283." evidence="6 7">
    <original>T</original>
    <variation>I</variation>
    <location>
        <position position="653"/>
    </location>
</feature>
<feature type="sequence variant" id="VAR_027476" description="In dbSNP:rs9536041.">
    <original>K</original>
    <variation>R</variation>
    <location>
        <position position="768"/>
    </location>
</feature>
<feature type="sequence variant" id="VAR_083721" description="In ANIB12; uncertain significance; loss of function in endothelial cell-matrix adhesion; decreased interaction with TLN1; dbSNP:rs780150341." evidence="6 7">
    <original>S</original>
    <variation>P</variation>
    <location>
        <position position="775"/>
    </location>
</feature>
<name>THSD1_HUMAN</name>
<proteinExistence type="evidence at protein level"/>
<evidence type="ECO:0000250" key="1">
    <source>
        <dbReference type="UniProtKB" id="Q9JM61"/>
    </source>
</evidence>
<evidence type="ECO:0000255" key="2"/>
<evidence type="ECO:0000255" key="3">
    <source>
        <dbReference type="PROSITE-ProRule" id="PRU00210"/>
    </source>
</evidence>
<evidence type="ECO:0000256" key="4">
    <source>
        <dbReference type="SAM" id="MobiDB-lite"/>
    </source>
</evidence>
<evidence type="ECO:0000269" key="5">
    <source>
    </source>
</evidence>
<evidence type="ECO:0000269" key="6">
    <source>
    </source>
</evidence>
<evidence type="ECO:0000269" key="7">
    <source>
    </source>
</evidence>
<evidence type="ECO:0000269" key="8">
    <source>
    </source>
</evidence>
<evidence type="ECO:0000303" key="9">
    <source>
    </source>
</evidence>
<evidence type="ECO:0000303" key="10">
    <source>
    </source>
</evidence>
<evidence type="ECO:0000305" key="11"/>
<dbReference type="EMBL" id="AB044385">
    <property type="protein sequence ID" value="BAA96553.1"/>
    <property type="molecule type" value="mRNA"/>
</dbReference>
<dbReference type="EMBL" id="AY358149">
    <property type="protein sequence ID" value="AAQ88516.1"/>
    <property type="molecule type" value="mRNA"/>
</dbReference>
<dbReference type="EMBL" id="AK315087">
    <property type="protein sequence ID" value="BAG37552.1"/>
    <property type="molecule type" value="mRNA"/>
</dbReference>
<dbReference type="EMBL" id="AL359513">
    <property type="status" value="NOT_ANNOTATED_CDS"/>
    <property type="molecule type" value="Genomic_DNA"/>
</dbReference>
<dbReference type="EMBL" id="CH471274">
    <property type="protein sequence ID" value="EAW55891.1"/>
    <property type="molecule type" value="Genomic_DNA"/>
</dbReference>
<dbReference type="EMBL" id="CH471274">
    <property type="protein sequence ID" value="EAW55894.1"/>
    <property type="molecule type" value="Genomic_DNA"/>
</dbReference>
<dbReference type="EMBL" id="BC063842">
    <property type="protein sequence ID" value="AAH63842.1"/>
    <property type="molecule type" value="mRNA"/>
</dbReference>
<dbReference type="CCDS" id="CCDS9432.1">
    <molecule id="Q9NS62-1"/>
</dbReference>
<dbReference type="CCDS" id="CCDS9433.1">
    <molecule id="Q9NS62-2"/>
</dbReference>
<dbReference type="RefSeq" id="NP_061146.1">
    <molecule id="Q9NS62-1"/>
    <property type="nucleotide sequence ID" value="NM_018676.4"/>
</dbReference>
<dbReference type="RefSeq" id="NP_954872.1">
    <molecule id="Q9NS62-2"/>
    <property type="nucleotide sequence ID" value="NM_199263.3"/>
</dbReference>
<dbReference type="BioGRID" id="120988">
    <property type="interactions" value="5"/>
</dbReference>
<dbReference type="CORUM" id="Q9NS62"/>
<dbReference type="FunCoup" id="Q9NS62">
    <property type="interactions" value="128"/>
</dbReference>
<dbReference type="IntAct" id="Q9NS62">
    <property type="interactions" value="2"/>
</dbReference>
<dbReference type="STRING" id="9606.ENSP00000258613"/>
<dbReference type="GlyCosmos" id="Q9NS62">
    <property type="glycosylation" value="10 sites, 2 glycans"/>
</dbReference>
<dbReference type="GlyGen" id="Q9NS62">
    <property type="glycosylation" value="11 sites, 2 O-linked glycans (3 sites)"/>
</dbReference>
<dbReference type="iPTMnet" id="Q9NS62"/>
<dbReference type="PhosphoSitePlus" id="Q9NS62"/>
<dbReference type="BioMuta" id="THSD1"/>
<dbReference type="DMDM" id="74752936"/>
<dbReference type="jPOST" id="Q9NS62"/>
<dbReference type="MassIVE" id="Q9NS62"/>
<dbReference type="PaxDb" id="9606-ENSP00000258613"/>
<dbReference type="PeptideAtlas" id="Q9NS62"/>
<dbReference type="ProteomicsDB" id="82492">
    <molecule id="Q9NS62-1"/>
</dbReference>
<dbReference type="ProteomicsDB" id="82493">
    <molecule id="Q9NS62-2"/>
</dbReference>
<dbReference type="ProteomicsDB" id="82494">
    <molecule id="Q9NS62-3"/>
</dbReference>
<dbReference type="Antibodypedia" id="2452">
    <property type="antibodies" value="232 antibodies from 23 providers"/>
</dbReference>
<dbReference type="DNASU" id="55901"/>
<dbReference type="Ensembl" id="ENST00000258613.5">
    <molecule id="Q9NS62-1"/>
    <property type="protein sequence ID" value="ENSP00000258613.4"/>
    <property type="gene ID" value="ENSG00000136114.17"/>
</dbReference>
<dbReference type="Ensembl" id="ENST00000349258.8">
    <molecule id="Q9NS62-2"/>
    <property type="protein sequence ID" value="ENSP00000340650.4"/>
    <property type="gene ID" value="ENSG00000136114.17"/>
</dbReference>
<dbReference type="Ensembl" id="ENST00000648254.1">
    <molecule id="Q9NS62-2"/>
    <property type="protein sequence ID" value="ENSP00000497520.1"/>
    <property type="gene ID" value="ENSG00000136114.17"/>
</dbReference>
<dbReference type="GeneID" id="55901"/>
<dbReference type="KEGG" id="hsa:55901"/>
<dbReference type="MANE-Select" id="ENST00000258613.5">
    <property type="protein sequence ID" value="ENSP00000258613.4"/>
    <property type="RefSeq nucleotide sequence ID" value="NM_018676.4"/>
    <property type="RefSeq protein sequence ID" value="NP_061146.1"/>
</dbReference>
<dbReference type="UCSC" id="uc001vgo.4">
    <molecule id="Q9NS62-1"/>
    <property type="organism name" value="human"/>
</dbReference>
<dbReference type="AGR" id="HGNC:17754"/>
<dbReference type="CTD" id="55901"/>
<dbReference type="DisGeNET" id="55901"/>
<dbReference type="GeneCards" id="THSD1"/>
<dbReference type="HGNC" id="HGNC:17754">
    <property type="gene designation" value="THSD1"/>
</dbReference>
<dbReference type="HPA" id="ENSG00000136114">
    <property type="expression patterns" value="Low tissue specificity"/>
</dbReference>
<dbReference type="MalaCards" id="THSD1"/>
<dbReference type="MIM" id="616821">
    <property type="type" value="gene"/>
</dbReference>
<dbReference type="MIM" id="618734">
    <property type="type" value="phenotype"/>
</dbReference>
<dbReference type="MIM" id="620244">
    <property type="type" value="phenotype"/>
</dbReference>
<dbReference type="neXtProt" id="NX_Q9NS62"/>
<dbReference type="OpenTargets" id="ENSG00000136114"/>
<dbReference type="Orphanet" id="231160">
    <property type="disease" value="Familial cerebral saccular aneurysm"/>
</dbReference>
<dbReference type="Orphanet" id="363999">
    <property type="disease" value="Non-immune hydrops fetalis"/>
</dbReference>
<dbReference type="PharmGKB" id="PA134937912"/>
<dbReference type="VEuPathDB" id="HostDB:ENSG00000136114"/>
<dbReference type="eggNOG" id="ENOG502QY3P">
    <property type="taxonomic scope" value="Eukaryota"/>
</dbReference>
<dbReference type="GeneTree" id="ENSGT00390000013335"/>
<dbReference type="HOGENOM" id="CLU_336470_0_0_1"/>
<dbReference type="InParanoid" id="Q9NS62"/>
<dbReference type="OMA" id="KECMMIQ"/>
<dbReference type="OrthoDB" id="16692at2759"/>
<dbReference type="PAN-GO" id="Q9NS62">
    <property type="GO annotations" value="1 GO annotation based on evolutionary models"/>
</dbReference>
<dbReference type="PhylomeDB" id="Q9NS62"/>
<dbReference type="TreeFam" id="TF333148"/>
<dbReference type="PathwayCommons" id="Q9NS62"/>
<dbReference type="Reactome" id="R-HSA-5083635">
    <property type="pathway name" value="Defective B3GALTL causes PpS"/>
</dbReference>
<dbReference type="Reactome" id="R-HSA-5173214">
    <property type="pathway name" value="O-glycosylation of TSR domain-containing proteins"/>
</dbReference>
<dbReference type="SignaLink" id="Q9NS62"/>
<dbReference type="BioGRID-ORCS" id="55901">
    <property type="hits" value="8 hits in 1144 CRISPR screens"/>
</dbReference>
<dbReference type="ChiTaRS" id="THSD1">
    <property type="organism name" value="human"/>
</dbReference>
<dbReference type="GeneWiki" id="THSD1"/>
<dbReference type="GenomeRNAi" id="55901"/>
<dbReference type="Pharos" id="Q9NS62">
    <property type="development level" value="Tbio"/>
</dbReference>
<dbReference type="PRO" id="PR:Q9NS62"/>
<dbReference type="Proteomes" id="UP000005640">
    <property type="component" value="Chromosome 13"/>
</dbReference>
<dbReference type="RNAct" id="Q9NS62">
    <property type="molecule type" value="protein"/>
</dbReference>
<dbReference type="Bgee" id="ENSG00000136114">
    <property type="expression patterns" value="Expressed in ventricular zone and 102 other cell types or tissues"/>
</dbReference>
<dbReference type="ExpressionAtlas" id="Q9NS62">
    <property type="expression patterns" value="baseline and differential"/>
</dbReference>
<dbReference type="GO" id="GO:0071944">
    <property type="term" value="C:cell periphery"/>
    <property type="evidence" value="ECO:0000318"/>
    <property type="project" value="GO_Central"/>
</dbReference>
<dbReference type="GO" id="GO:0005829">
    <property type="term" value="C:cytosol"/>
    <property type="evidence" value="ECO:0000314"/>
    <property type="project" value="HPA"/>
</dbReference>
<dbReference type="GO" id="GO:0005768">
    <property type="term" value="C:endosome"/>
    <property type="evidence" value="ECO:0000314"/>
    <property type="project" value="UniProtKB"/>
</dbReference>
<dbReference type="GO" id="GO:0010008">
    <property type="term" value="C:endosome membrane"/>
    <property type="evidence" value="ECO:0007669"/>
    <property type="project" value="UniProtKB-SubCell"/>
</dbReference>
<dbReference type="GO" id="GO:0005576">
    <property type="term" value="C:extracellular region"/>
    <property type="evidence" value="ECO:0007669"/>
    <property type="project" value="UniProtKB-SubCell"/>
</dbReference>
<dbReference type="GO" id="GO:0005925">
    <property type="term" value="C:focal adhesion"/>
    <property type="evidence" value="ECO:0000315"/>
    <property type="project" value="UniProtKB"/>
</dbReference>
<dbReference type="GO" id="GO:0050840">
    <property type="term" value="F:extracellular matrix binding"/>
    <property type="evidence" value="ECO:0000315"/>
    <property type="project" value="UniProtKB"/>
</dbReference>
<dbReference type="GO" id="GO:0048041">
    <property type="term" value="P:focal adhesion assembly"/>
    <property type="evidence" value="ECO:0000314"/>
    <property type="project" value="UniProtKB"/>
</dbReference>
<dbReference type="FunFam" id="2.20.100.10:FF:000115">
    <property type="entry name" value="Thrombospondin type-1 domain-containing protein 1"/>
    <property type="match status" value="1"/>
</dbReference>
<dbReference type="Gene3D" id="2.20.100.10">
    <property type="entry name" value="Thrombospondin type-1 (TSP1) repeat"/>
    <property type="match status" value="1"/>
</dbReference>
<dbReference type="InterPro" id="IPR038877">
    <property type="entry name" value="THSD1"/>
</dbReference>
<dbReference type="InterPro" id="IPR056218">
    <property type="entry name" value="THSD1_D2"/>
</dbReference>
<dbReference type="InterPro" id="IPR056219">
    <property type="entry name" value="THSD1_D3"/>
</dbReference>
<dbReference type="InterPro" id="IPR056217">
    <property type="entry name" value="THSD1_N"/>
</dbReference>
<dbReference type="InterPro" id="IPR000884">
    <property type="entry name" value="TSP1_rpt"/>
</dbReference>
<dbReference type="InterPro" id="IPR036383">
    <property type="entry name" value="TSP1_rpt_sf"/>
</dbReference>
<dbReference type="PANTHER" id="PTHR16311">
    <property type="entry name" value="THROMBOSPONDIN TYPE I DOMAIN-CONTAINING 1"/>
    <property type="match status" value="1"/>
</dbReference>
<dbReference type="PANTHER" id="PTHR16311:SF3">
    <property type="entry name" value="THROMBOSPONDIN TYPE-1 DOMAIN-CONTAINING PROTEIN 1"/>
    <property type="match status" value="1"/>
</dbReference>
<dbReference type="Pfam" id="PF24310">
    <property type="entry name" value="THSD1_D2"/>
    <property type="match status" value="1"/>
</dbReference>
<dbReference type="Pfam" id="PF24311">
    <property type="entry name" value="THSD1_D3"/>
    <property type="match status" value="1"/>
</dbReference>
<dbReference type="Pfam" id="PF24306">
    <property type="entry name" value="THSD1_N"/>
    <property type="match status" value="1"/>
</dbReference>
<dbReference type="Pfam" id="PF00090">
    <property type="entry name" value="TSP_1"/>
    <property type="match status" value="1"/>
</dbReference>
<dbReference type="SMART" id="SM00209">
    <property type="entry name" value="TSP1"/>
    <property type="match status" value="1"/>
</dbReference>
<dbReference type="SUPFAM" id="SSF82895">
    <property type="entry name" value="TSP-1 type 1 repeat"/>
    <property type="match status" value="1"/>
</dbReference>
<dbReference type="PROSITE" id="PS50092">
    <property type="entry name" value="TSP1"/>
    <property type="match status" value="1"/>
</dbReference>
<comment type="function">
    <text evidence="6 7">Is a positive regulator of nascent focal adhesion assembly, involved in the modulation of endothelial cell attachment to the extracellular matrix.</text>
</comment>
<comment type="subunit">
    <text evidence="6 7">Part of a complex composed of THSD1, PTK2/FAK1, TLN1 and VCL (PubMed:29069646). Interacts with TLN1 (PubMed:27895300, PubMed:29069646).</text>
</comment>
<comment type="subcellular location">
    <molecule>Isoform 1</molecule>
    <subcellularLocation>
        <location evidence="7">Endosome membrane</location>
        <topology evidence="11">Single-pass type I membrane protein</topology>
    </subcellularLocation>
    <subcellularLocation>
        <location evidence="7">Cell junction</location>
        <location evidence="7">Focal adhesion</location>
    </subcellularLocation>
    <text evidence="7">Localizes to nascent focal adhesions.</text>
</comment>
<comment type="subcellular location">
    <molecule>Isoform 2</molecule>
    <subcellularLocation>
        <location evidence="11">Membrane</location>
        <topology evidence="11">Single-pass type I membrane protein</topology>
    </subcellularLocation>
</comment>
<comment type="subcellular location">
    <molecule>Isoform 3</molecule>
    <subcellularLocation>
        <location>Secreted</location>
    </subcellularLocation>
</comment>
<comment type="alternative products">
    <event type="alternative splicing"/>
    <isoform>
        <id>Q9NS62-1</id>
        <name>1</name>
        <sequence type="displayed"/>
    </isoform>
    <isoform>
        <id>Q9NS62-2</id>
        <name>2</name>
        <sequence type="described" ref="VSP_020521"/>
    </isoform>
    <isoform>
        <id>Q9NS62-3</id>
        <name>3</name>
        <sequence type="described" ref="VSP_020522 VSP_020523"/>
    </isoform>
</comment>
<comment type="disease" evidence="5 8">
    <disease id="DI-06611">
        <name>Lymphatic malformation 13</name>
        <acronym>LMPHM13</acronym>
        <description>A form of primary lymphedema, a disease characterized by swelling of body parts due to developmental anomalies and functional defects of the lymphatic system. Patients with lymphedema may suffer from recurrent local infections. LMPHM13 is an autosomal recessive form characterized by fetal onset of pleural and peritoneal effusions and the presence of moderate to severe non-immune hydrops fetalis that often resolves with age. Affected individuals show relatively normal growth and development, apart from mild ascites and hemangiomas. Most patients have congenital cardiac defects.</description>
        <dbReference type="MIM" id="620244"/>
    </disease>
    <text>The disease is caused by variants affecting the gene represented in this entry.</text>
</comment>
<comment type="disease" evidence="6 7">
    <disease id="DI-05735">
        <name>Aneurysm, intracranial berry, 12</name>
        <acronym>ANIB12</acronym>
        <description>A form of cerebral aneurysm, a focal abnormal dilatation of a blood vessel in the brain. Berry intracranial aneurysms, also known as saccular aneurysms, have a characteristic rounded shape and account for the vast majority of intracranial aneurysms. They are the most common cause of non-traumatic subarachnoid hemorrhage, a sudden-onset disease that can lead to severe disability and death. Several risk factors such as smoking, hypertension, and excessive alcohol intake are associated with subarachnoid hemorrhage.</description>
        <dbReference type="MIM" id="618734"/>
    </disease>
    <text>The disease is caused by variants affecting the gene represented in this entry.</text>
</comment>
<reference key="1">
    <citation type="submission" date="2000-06" db="EMBL/GenBank/DDBJ databases">
        <title>Transmembrane molecule with thrombospondin module.</title>
        <authorList>
            <person name="Hiroyama T."/>
            <person name="Atsushi I."/>
            <person name="Yukio N."/>
            <person name="Hiromitsu N."/>
        </authorList>
    </citation>
    <scope>NUCLEOTIDE SEQUENCE [MRNA] (ISOFORM 1)</scope>
    <source>
        <tissue>Placenta</tissue>
    </source>
</reference>
<reference key="2">
    <citation type="journal article" date="2003" name="Genome Res.">
        <title>The secreted protein discovery initiative (SPDI), a large-scale effort to identify novel human secreted and transmembrane proteins: a bioinformatics assessment.</title>
        <authorList>
            <person name="Clark H.F."/>
            <person name="Gurney A.L."/>
            <person name="Abaya E."/>
            <person name="Baker K."/>
            <person name="Baldwin D.T."/>
            <person name="Brush J."/>
            <person name="Chen J."/>
            <person name="Chow B."/>
            <person name="Chui C."/>
            <person name="Crowley C."/>
            <person name="Currell B."/>
            <person name="Deuel B."/>
            <person name="Dowd P."/>
            <person name="Eaton D."/>
            <person name="Foster J.S."/>
            <person name="Grimaldi C."/>
            <person name="Gu Q."/>
            <person name="Hass P.E."/>
            <person name="Heldens S."/>
            <person name="Huang A."/>
            <person name="Kim H.S."/>
            <person name="Klimowski L."/>
            <person name="Jin Y."/>
            <person name="Johnson S."/>
            <person name="Lee J."/>
            <person name="Lewis L."/>
            <person name="Liao D."/>
            <person name="Mark M.R."/>
            <person name="Robbie E."/>
            <person name="Sanchez C."/>
            <person name="Schoenfeld J."/>
            <person name="Seshagiri S."/>
            <person name="Simmons L."/>
            <person name="Singh J."/>
            <person name="Smith V."/>
            <person name="Stinson J."/>
            <person name="Vagts A."/>
            <person name="Vandlen R.L."/>
            <person name="Watanabe C."/>
            <person name="Wieand D."/>
            <person name="Woods K."/>
            <person name="Xie M.-H."/>
            <person name="Yansura D.G."/>
            <person name="Yi S."/>
            <person name="Yu G."/>
            <person name="Yuan J."/>
            <person name="Zhang M."/>
            <person name="Zhang Z."/>
            <person name="Goddard A.D."/>
            <person name="Wood W.I."/>
            <person name="Godowski P.J."/>
            <person name="Gray A.M."/>
        </authorList>
    </citation>
    <scope>NUCLEOTIDE SEQUENCE [LARGE SCALE MRNA] (ISOFORM 3)</scope>
</reference>
<reference key="3">
    <citation type="journal article" date="2004" name="Nat. Genet.">
        <title>Complete sequencing and characterization of 21,243 full-length human cDNAs.</title>
        <authorList>
            <person name="Ota T."/>
            <person name="Suzuki Y."/>
            <person name="Nishikawa T."/>
            <person name="Otsuki T."/>
            <person name="Sugiyama T."/>
            <person name="Irie R."/>
            <person name="Wakamatsu A."/>
            <person name="Hayashi K."/>
            <person name="Sato H."/>
            <person name="Nagai K."/>
            <person name="Kimura K."/>
            <person name="Makita H."/>
            <person name="Sekine M."/>
            <person name="Obayashi M."/>
            <person name="Nishi T."/>
            <person name="Shibahara T."/>
            <person name="Tanaka T."/>
            <person name="Ishii S."/>
            <person name="Yamamoto J."/>
            <person name="Saito K."/>
            <person name="Kawai Y."/>
            <person name="Isono Y."/>
            <person name="Nakamura Y."/>
            <person name="Nagahari K."/>
            <person name="Murakami K."/>
            <person name="Yasuda T."/>
            <person name="Iwayanagi T."/>
            <person name="Wagatsuma M."/>
            <person name="Shiratori A."/>
            <person name="Sudo H."/>
            <person name="Hosoiri T."/>
            <person name="Kaku Y."/>
            <person name="Kodaira H."/>
            <person name="Kondo H."/>
            <person name="Sugawara M."/>
            <person name="Takahashi M."/>
            <person name="Kanda K."/>
            <person name="Yokoi T."/>
            <person name="Furuya T."/>
            <person name="Kikkawa E."/>
            <person name="Omura Y."/>
            <person name="Abe K."/>
            <person name="Kamihara K."/>
            <person name="Katsuta N."/>
            <person name="Sato K."/>
            <person name="Tanikawa M."/>
            <person name="Yamazaki M."/>
            <person name="Ninomiya K."/>
            <person name="Ishibashi T."/>
            <person name="Yamashita H."/>
            <person name="Murakawa K."/>
            <person name="Fujimori K."/>
            <person name="Tanai H."/>
            <person name="Kimata M."/>
            <person name="Watanabe M."/>
            <person name="Hiraoka S."/>
            <person name="Chiba Y."/>
            <person name="Ishida S."/>
            <person name="Ono Y."/>
            <person name="Takiguchi S."/>
            <person name="Watanabe S."/>
            <person name="Yosida M."/>
            <person name="Hotuta T."/>
            <person name="Kusano J."/>
            <person name="Kanehori K."/>
            <person name="Takahashi-Fujii A."/>
            <person name="Hara H."/>
            <person name="Tanase T.-O."/>
            <person name="Nomura Y."/>
            <person name="Togiya S."/>
            <person name="Komai F."/>
            <person name="Hara R."/>
            <person name="Takeuchi K."/>
            <person name="Arita M."/>
            <person name="Imose N."/>
            <person name="Musashino K."/>
            <person name="Yuuki H."/>
            <person name="Oshima A."/>
            <person name="Sasaki N."/>
            <person name="Aotsuka S."/>
            <person name="Yoshikawa Y."/>
            <person name="Matsunawa H."/>
            <person name="Ichihara T."/>
            <person name="Shiohata N."/>
            <person name="Sano S."/>
            <person name="Moriya S."/>
            <person name="Momiyama H."/>
            <person name="Satoh N."/>
            <person name="Takami S."/>
            <person name="Terashima Y."/>
            <person name="Suzuki O."/>
            <person name="Nakagawa S."/>
            <person name="Senoh A."/>
            <person name="Mizoguchi H."/>
            <person name="Goto Y."/>
            <person name="Shimizu F."/>
            <person name="Wakebe H."/>
            <person name="Hishigaki H."/>
            <person name="Watanabe T."/>
            <person name="Sugiyama A."/>
            <person name="Takemoto M."/>
            <person name="Kawakami B."/>
            <person name="Yamazaki M."/>
            <person name="Watanabe K."/>
            <person name="Kumagai A."/>
            <person name="Itakura S."/>
            <person name="Fukuzumi Y."/>
            <person name="Fujimori Y."/>
            <person name="Komiyama M."/>
            <person name="Tashiro H."/>
            <person name="Tanigami A."/>
            <person name="Fujiwara T."/>
            <person name="Ono T."/>
            <person name="Yamada K."/>
            <person name="Fujii Y."/>
            <person name="Ozaki K."/>
            <person name="Hirao M."/>
            <person name="Ohmori Y."/>
            <person name="Kawabata A."/>
            <person name="Hikiji T."/>
            <person name="Kobatake N."/>
            <person name="Inagaki H."/>
            <person name="Ikema Y."/>
            <person name="Okamoto S."/>
            <person name="Okitani R."/>
            <person name="Kawakami T."/>
            <person name="Noguchi S."/>
            <person name="Itoh T."/>
            <person name="Shigeta K."/>
            <person name="Senba T."/>
            <person name="Matsumura K."/>
            <person name="Nakajima Y."/>
            <person name="Mizuno T."/>
            <person name="Morinaga M."/>
            <person name="Sasaki M."/>
            <person name="Togashi T."/>
            <person name="Oyama M."/>
            <person name="Hata H."/>
            <person name="Watanabe M."/>
            <person name="Komatsu T."/>
            <person name="Mizushima-Sugano J."/>
            <person name="Satoh T."/>
            <person name="Shirai Y."/>
            <person name="Takahashi Y."/>
            <person name="Nakagawa K."/>
            <person name="Okumura K."/>
            <person name="Nagase T."/>
            <person name="Nomura N."/>
            <person name="Kikuchi H."/>
            <person name="Masuho Y."/>
            <person name="Yamashita R."/>
            <person name="Nakai K."/>
            <person name="Yada T."/>
            <person name="Nakamura Y."/>
            <person name="Ohara O."/>
            <person name="Isogai T."/>
            <person name="Sugano S."/>
        </authorList>
    </citation>
    <scope>NUCLEOTIDE SEQUENCE [LARGE SCALE MRNA] (ISOFORM 1)</scope>
</reference>
<reference key="4">
    <citation type="journal article" date="2004" name="Nature">
        <title>The DNA sequence and analysis of human chromosome 13.</title>
        <authorList>
            <person name="Dunham A."/>
            <person name="Matthews L.H."/>
            <person name="Burton J."/>
            <person name="Ashurst J.L."/>
            <person name="Howe K.L."/>
            <person name="Ashcroft K.J."/>
            <person name="Beare D.M."/>
            <person name="Burford D.C."/>
            <person name="Hunt S.E."/>
            <person name="Griffiths-Jones S."/>
            <person name="Jones M.C."/>
            <person name="Keenan S.J."/>
            <person name="Oliver K."/>
            <person name="Scott C.E."/>
            <person name="Ainscough R."/>
            <person name="Almeida J.P."/>
            <person name="Ambrose K.D."/>
            <person name="Andrews D.T."/>
            <person name="Ashwell R.I.S."/>
            <person name="Babbage A.K."/>
            <person name="Bagguley C.L."/>
            <person name="Bailey J."/>
            <person name="Bannerjee R."/>
            <person name="Barlow K.F."/>
            <person name="Bates K."/>
            <person name="Beasley H."/>
            <person name="Bird C.P."/>
            <person name="Bray-Allen S."/>
            <person name="Brown A.J."/>
            <person name="Brown J.Y."/>
            <person name="Burrill W."/>
            <person name="Carder C."/>
            <person name="Carter N.P."/>
            <person name="Chapman J.C."/>
            <person name="Clamp M.E."/>
            <person name="Clark S.Y."/>
            <person name="Clarke G."/>
            <person name="Clee C.M."/>
            <person name="Clegg S.C."/>
            <person name="Cobley V."/>
            <person name="Collins J.E."/>
            <person name="Corby N."/>
            <person name="Coville G.J."/>
            <person name="Deloukas P."/>
            <person name="Dhami P."/>
            <person name="Dunham I."/>
            <person name="Dunn M."/>
            <person name="Earthrowl M.E."/>
            <person name="Ellington A.G."/>
            <person name="Faulkner L."/>
            <person name="Frankish A.G."/>
            <person name="Frankland J."/>
            <person name="French L."/>
            <person name="Garner P."/>
            <person name="Garnett J."/>
            <person name="Gilbert J.G.R."/>
            <person name="Gilson C.J."/>
            <person name="Ghori J."/>
            <person name="Grafham D.V."/>
            <person name="Gribble S.M."/>
            <person name="Griffiths C."/>
            <person name="Hall R.E."/>
            <person name="Hammond S."/>
            <person name="Harley J.L."/>
            <person name="Hart E.A."/>
            <person name="Heath P.D."/>
            <person name="Howden P.J."/>
            <person name="Huckle E.J."/>
            <person name="Hunt P.J."/>
            <person name="Hunt A.R."/>
            <person name="Johnson C."/>
            <person name="Johnson D."/>
            <person name="Kay M."/>
            <person name="Kimberley A.M."/>
            <person name="King A."/>
            <person name="Laird G.K."/>
            <person name="Langford C.J."/>
            <person name="Lawlor S."/>
            <person name="Leongamornlert D.A."/>
            <person name="Lloyd D.M."/>
            <person name="Lloyd C."/>
            <person name="Loveland J.E."/>
            <person name="Lovell J."/>
            <person name="Martin S."/>
            <person name="Mashreghi-Mohammadi M."/>
            <person name="McLaren S.J."/>
            <person name="McMurray A."/>
            <person name="Milne S."/>
            <person name="Moore M.J.F."/>
            <person name="Nickerson T."/>
            <person name="Palmer S.A."/>
            <person name="Pearce A.V."/>
            <person name="Peck A.I."/>
            <person name="Pelan S."/>
            <person name="Phillimore B."/>
            <person name="Porter K.M."/>
            <person name="Rice C.M."/>
            <person name="Searle S."/>
            <person name="Sehra H.K."/>
            <person name="Shownkeen R."/>
            <person name="Skuce C.D."/>
            <person name="Smith M."/>
            <person name="Steward C.A."/>
            <person name="Sycamore N."/>
            <person name="Tester J."/>
            <person name="Thomas D.W."/>
            <person name="Tracey A."/>
            <person name="Tromans A."/>
            <person name="Tubby B."/>
            <person name="Wall M."/>
            <person name="Wallis J.M."/>
            <person name="West A.P."/>
            <person name="Whitehead S.L."/>
            <person name="Willey D.L."/>
            <person name="Wilming L."/>
            <person name="Wray P.W."/>
            <person name="Wright M.W."/>
            <person name="Young L."/>
            <person name="Coulson A."/>
            <person name="Durbin R.M."/>
            <person name="Hubbard T."/>
            <person name="Sulston J.E."/>
            <person name="Beck S."/>
            <person name="Bentley D.R."/>
            <person name="Rogers J."/>
            <person name="Ross M.T."/>
        </authorList>
    </citation>
    <scope>NUCLEOTIDE SEQUENCE [LARGE SCALE GENOMIC DNA]</scope>
</reference>
<reference key="5">
    <citation type="submission" date="2005-07" db="EMBL/GenBank/DDBJ databases">
        <authorList>
            <person name="Mural R.J."/>
            <person name="Istrail S."/>
            <person name="Sutton G.G."/>
            <person name="Florea L."/>
            <person name="Halpern A.L."/>
            <person name="Mobarry C.M."/>
            <person name="Lippert R."/>
            <person name="Walenz B."/>
            <person name="Shatkay H."/>
            <person name="Dew I."/>
            <person name="Miller J.R."/>
            <person name="Flanigan M.J."/>
            <person name="Edwards N.J."/>
            <person name="Bolanos R."/>
            <person name="Fasulo D."/>
            <person name="Halldorsson B.V."/>
            <person name="Hannenhalli S."/>
            <person name="Turner R."/>
            <person name="Yooseph S."/>
            <person name="Lu F."/>
            <person name="Nusskern D.R."/>
            <person name="Shue B.C."/>
            <person name="Zheng X.H."/>
            <person name="Zhong F."/>
            <person name="Delcher A.L."/>
            <person name="Huson D.H."/>
            <person name="Kravitz S.A."/>
            <person name="Mouchard L."/>
            <person name="Reinert K."/>
            <person name="Remington K.A."/>
            <person name="Clark A.G."/>
            <person name="Waterman M.S."/>
            <person name="Eichler E.E."/>
            <person name="Adams M.D."/>
            <person name="Hunkapiller M.W."/>
            <person name="Myers E.W."/>
            <person name="Venter J.C."/>
        </authorList>
    </citation>
    <scope>NUCLEOTIDE SEQUENCE [LARGE SCALE GENOMIC DNA]</scope>
</reference>
<reference key="6">
    <citation type="journal article" date="2004" name="Genome Res.">
        <title>The status, quality, and expansion of the NIH full-length cDNA project: the Mammalian Gene Collection (MGC).</title>
        <authorList>
            <consortium name="The MGC Project Team"/>
        </authorList>
    </citation>
    <scope>NUCLEOTIDE SEQUENCE [LARGE SCALE MRNA] (ISOFORM 2)</scope>
    <source>
        <tissue>PNS</tissue>
    </source>
</reference>
<reference key="7">
    <citation type="journal article" date="2015" name="Genome Biol.">
        <title>Identification of embryonic lethal genes in humans by autozygosity mapping and exome sequencing in consanguineous families.</title>
        <authorList>
            <person name="Shamseldin H.E."/>
            <person name="Tulbah M."/>
            <person name="Kurdi W."/>
            <person name="Nemer M."/>
            <person name="Alsahan N."/>
            <person name="Al Mardawi E."/>
            <person name="Khalifa O."/>
            <person name="Hashem A."/>
            <person name="Kurdi A."/>
            <person name="Babay Z."/>
            <person name="Bubshait D.K."/>
            <person name="Ibrahim N."/>
            <person name="Abdulwahab F."/>
            <person name="Rahbeeni Z."/>
            <person name="Hashem M."/>
            <person name="Alkuraya F.S."/>
        </authorList>
    </citation>
    <scope>INVOLVEMENT IN LMPHM13</scope>
    <scope>VARIANTS LMPHM13 TYR-206 AND 224-ARG--ILE-852 DEL</scope>
</reference>
<reference key="8">
    <citation type="journal article" date="2016" name="Stroke">
        <title>THSD1 (thrombospondin type 1 domain containing protein 1) mutation in the pathogenesis of intracranial aneurysm and subarachnoid emorrhage.</title>
        <authorList>
            <person name="Santiago-Sim T."/>
            <person name="Fang X."/>
            <person name="Hennessy M.L."/>
            <person name="Nalbach S.V."/>
            <person name="DePalma S.R."/>
            <person name="Lee M.S."/>
            <person name="Greenway S.C."/>
            <person name="McDonough B."/>
            <person name="Hergenroeder G.W."/>
            <person name="Patek K.J."/>
            <person name="Colosimo S.M."/>
            <person name="Qualmann K.J."/>
            <person name="Hagan J.P."/>
            <person name="Milewicz D.M."/>
            <person name="MacRae C.A."/>
            <person name="Dymecki S.M."/>
            <person name="Seidman C.E."/>
            <person name="Seidman J.G."/>
            <person name="Kim D.H."/>
        </authorList>
    </citation>
    <scope>INVOLVEMENT IN ANIB12</scope>
    <scope>VARIANTS ANIB12 PHE-5; 450-ARG--ILE-852 DEL; TRP-460; GLY-466; GLU-600; LEU-639; ILE-653 AND PRO-775</scope>
    <scope>CHARACTERIZATION OF VARIANTS ANIB12 PHE-5; 450-ARG--ILE-852 DEL; TRP-460; GLY-466; GLU-600; LEU-639; ILE-653 AND PRO-775</scope>
    <scope>FUNCTION</scope>
    <scope>INTERACTION WITH TLN1</scope>
</reference>
<reference key="9">
    <citation type="journal article" date="2016" name="Stroke">
        <title>THSD1 (thrombospondin type 1 domain containing protein 1) mutation in the pathogenesis of intracranial aneurysm and subarachnoid emorrhage.</title>
        <authorList>
            <person name="Santiago-Sim T."/>
            <person name="Fang X."/>
            <person name="Hennessy M.L."/>
            <person name="Nalbach S.V."/>
            <person name="DePalma S.R."/>
            <person name="Lee M.S."/>
            <person name="Greenway S.C."/>
            <person name="McDonough B."/>
            <person name="Hergenroeder G.W."/>
            <person name="Patek K.J."/>
            <person name="Colosimo S.M."/>
            <person name="Qualmann K.J."/>
            <person name="Hagan J.P."/>
            <person name="Milewicz D.M."/>
            <person name="MacRae C.A."/>
            <person name="Dymecki S.M."/>
            <person name="Seidman C.E."/>
            <person name="Seidman J.G."/>
            <person name="Kim D.H."/>
        </authorList>
    </citation>
    <scope>ERRATUM OF PUBMED:27895300</scope>
</reference>
<reference key="10">
    <citation type="journal article" date="2017" name="Cell. Physiol. Biochem.">
        <title>The Intracranial Aneurysm Gene THSD1 Connects Endosome Dynamics to Nascent Focal Adhesion Assembly.</title>
        <authorList>
            <person name="Rui Y.N."/>
            <person name="Xu Z."/>
            <person name="Fang X."/>
            <person name="Menezes M.R."/>
            <person name="Balzeau J."/>
            <person name="Niu A."/>
            <person name="Hagan J.P."/>
            <person name="Kim D.H."/>
        </authorList>
    </citation>
    <scope>INVOLVEMENT IN ANIB12</scope>
    <scope>CHARACTERIZATION OF VARIANTS ANIB12 TRP-460; GLY-466; GLU-600; LEU-639; ILE-653 AND PRO-775</scope>
    <scope>FUNCTION</scope>
    <scope>SUBCELLULAR LOCATION</scope>
    <scope>SUBUNIT</scope>
    <scope>INTERACTION WITH TLN1</scope>
</reference>
<reference key="11">
    <citation type="journal article" date="2021" name="Am. J. Med. Genet. A">
        <title>Manifestations of thrombospondin type-1 domain-containing protein 1 gene mutation in an extremely premature infant with nonimmune hydrops fetalis.</title>
        <authorList>
            <person name="Al Rawi W.N."/>
            <person name="Ibrahim F.H."/>
            <person name="El Nakeib O.A.S."/>
            <person name="Al Zidgali F.M."/>
        </authorList>
    </citation>
    <scope>VARIANT LMPHM13 521-GLN--ILE-852 DEL</scope>
</reference>
<sequence length="852" mass="94584">MKPMLKDFSNLLLVVLCDYVLGEAEYLLLREPGHVALSNDTVYVDFQYFDGANGTLRNVSVLLLEANTNQTVTTKYLLTNQSQGTLKFECFYFKEAGDYWFTMTPEATDNSTPFPWWEKSAFLKVEWPVFHVDLNRSAKAAEGTFQVGLFTSQPLCPFPVDKPNIVVDVIFTNSLPEARRNSRQPLEIRTSKRTELAQGQWVEFGCAPLGPEAYVTVVLKLLGRDSVITSTGPIDLAQKFGYKLVMVPELTCESGVEVTVLPPPCTFVQGVVTVFKEAPRYPGKRTIHLAENSLPLGERRTIFNCTLFDMGKNKYCFDFGISSRSHFSAKEECMLIQRNTETWGLWQPWSQCSATCGDGVRERRRVCLTSFPSSPVCPGMSLEASLCSLEECAAFQPSSPSPLQPQGPVKSNNIVTVTGISLCLFIIIATVLITLWRRFGRPAKCSTPARHNSIHSPSFRKNSDEENICELSEQRGSFSDGGDGPTGSPGDTGIPLTYRRSGPVPPEDDASGSESFQSNAQKIIPPLFSYRLAQQQLKEMKKKGLTETTKVYHVSQSPLTDTAIDAAPSAPLDLESPEEAAANKFRIKSPFPEQPAVSAGERPPSRLDLNVTQASCAISPSQTLIRKSQARHVGSRGGPSERSHARNAHFRRTASFHEARQARPFRERSMSTLTPRQAPAYSSRTRTCEQAEDRFRPQSRGAHLFPEKLEHFQEASGTRGPLNPLPKSYTLGQPLRKPDLGDHQAGLVAGIERTEPHRARRGPSPSHKSVSRKQSSPISPKDNYQRVSSLSPSQCRKDKCQSFPTHPEFAFYDNTSFGLTEAEQRMLDLPGYFGSNEEDETTSTLSVEKLVI</sequence>